<name>YCF2_ANTAG</name>
<comment type="function">
    <text>Probable ATPase of unknown function. Its presence in a non-photosynthetic plant (Epifagus virginiana) and experiments in tobacco indicate that it has an essential function which is probably not related to photosynthesis.</text>
</comment>
<comment type="subcellular location">
    <subcellularLocation>
        <location evidence="1">Plastid</location>
        <location evidence="1">Chloroplast stroma</location>
    </subcellularLocation>
</comment>
<comment type="RNA editing">
    <location>
        <position position="344" evidence="2 3"/>
    </location>
    <location>
        <position position="744" evidence="2 3"/>
    </location>
    <location>
        <position position="861" evidence="2 3"/>
    </location>
    <location>
        <position position="1131" evidence="2 3"/>
    </location>
    <location>
        <position position="1255" evidence="2 3"/>
    </location>
    <location>
        <position position="1687" evidence="2 3"/>
    </location>
    <location>
        <position position="1748" evidence="2 3"/>
    </location>
    <location>
        <position position="1805" evidence="2 3"/>
    </location>
    <location>
        <position position="2158" evidence="2 3"/>
    </location>
    <location>
        <position position="2307" evidence="2 3"/>
    </location>
    <text>The nonsense codons at positions 344, 744, 861, 1131, 1255, 1805, 2158 and 2307 are modified to sense codons.</text>
</comment>
<comment type="similarity">
    <text evidence="1">Belongs to the Ycf2 family.</text>
</comment>
<feature type="chain" id="PRO_0000223048" description="Protein Ycf2">
    <location>
        <begin position="1"/>
        <end position="2392"/>
    </location>
</feature>
<feature type="binding site" evidence="1">
    <location>
        <begin position="1658"/>
        <end position="1665"/>
    </location>
    <ligand>
        <name>ATP</name>
        <dbReference type="ChEBI" id="CHEBI:30616"/>
    </ligand>
</feature>
<protein>
    <recommendedName>
        <fullName evidence="1">Protein Ycf2</fullName>
    </recommendedName>
</protein>
<sequence>MKQKLLENKFSYRKFKLEEIKKYEYLLNSCINWNLIKLVTGIPSNREHLIKLFDLRILSSLILRDLRKSEMKKSLILKSFPLLILSMFIHRMNSRNIVEINNCHLERIIYGGINYREGRDEISRRYLHSFMKNFSIPLNYPFSTKKGRERYTNNLLRQKKHIWVFKRNLLGKKYIKPVYDKIDFYNFEEWKTLIIKEILPSWKISNQSIDKANILLEDKNIEDLKHFFELYVDDIIRRDYHWKNSLDIISYRDRKNQVNFNLKNNLEFLDKKLFYCLISAFCEKVLSEVEGPFKHKRIKSTFNLKNIEDFSDFEVTNKEIFKWELHWWKKKIFQFLDKNHESDQSIAKSFTFFQNKRFLFLENYAEFYTWLLYEDSPFHLKKNKQLLDTAKDTFKEDSFQLNDRRNQIYSFENKGIFLNILHNFSIYVSNKVRKLNHLKIFSDISIKNSYLINKNLVYHGKGSGGTIYEDEKQKTWDTTDFYLKREKYFISKTDFLSRSIEKKCFKSNKYFLDLFLNRGDTNKRSTTESNIHSYDLSSLTKAKRKEVKSGSSYEFLEKDSFFFLMKENFVKDFKSITKDFFSNREKKMTDYFPKLINYAFLDISSIDESNMSFHITGRHLKDFPLNEWRTNIPSRNYMLSDISRMINLSKIRKKFQNVFFVSSISSKRIRQNKNSNDFYLISLIKLNLSWNRPYLCWSTLYKCNKQYIFNRYLKLKERFMRGVEQLNLLITKPNQNYDKILYFQVESEIGKFHKSKENELNYNFFFPLLNGINEDDKFLNEMFHKKVEAHSEENFETYIYPTNHRKKLKLWYELNKGSYICLDNVVKKYYSIYKLKFYLINRMKKLWVERIENGNSSNFIRNIVNGHSSNWKINGREWSDYNIKRDKYINWNSYIYKWFDRTKNLQIFPNWFSDNTSRRWFNEIRFIKPDIFMTYPKKLEKNYYSKVYFIFNTSSNSLLESISKKKNINLRGRVLHNYKKLSRDSEKLIKNKLLPESFLNKNLIKNIIISLFNNEKNHDIFREFPRKTFSLWIYKNRNNGFNSINNFQKNLMMNFHNTNTIEFLDYLHDFHFRYDKRLPFFMKEIHIKNYDSTYNKFLRILPIYSNLRSLSINKIKPFFFQSRIDITLSIQLQVFNDSLSNYLGRTCNYIFTSFTNHLYKLLNLLIKINSSIYKETDSCSIQKFLAMTPSGPTILNLKITHYDEFFLGELTSNFNGYFEFSSEPNLSHTEIQSYKNELLSEFLIEFRNKNNRKLQWIKESFLKLNLKENFKYVIGGESIDRISINLDFYEKNKNILPYPSLSITDFFDKDDKIKVSKKLYFLEKWNFFQNYTSWFFTFEWWRYFSNIPLETFPEVLLNITDQSKYISYKTTQYIEEILKDLWKNLNFIFQTNILRKININSEIRLLKQINNEQHESIFIYIWSHFQFINLSNAIYLTLISLSVSCFLVSENYFSTLIGLDYIDSWRRFKVIEYLRDPLRGSYLVERWIYGNQTQIIRTENFFMLLLKNFIHYIKNGRFFLFTRKKLDTWLFHSRTLDLSRRKKDLLVKSVITERSLSQYRLNLNLNHNLRNYDFGYKISEKPGFYYLRYLAETYQKDLVNHSFYSSHLAEKWILLAFWKGMISSQKLWQTKILNHESYRIPIPFELDLFSSKGILLVGPTEIGKSYLIKNLAADSYVPLIKISISKLLYNKPDVITESWINILMESLQRLTLILELAKKMSPCIIWIQDIHELNVNRSTENVESDPTFLLGILLKYFHTEFISKSTKGIIIIGSTHLPRKVDPALISPNRLDKLMNIRIIDIFERQEKFSILLHSKRFYFKNKLLHFNEFAYRTMGYNGRDLVALANEVSLINTTQGNSTIYIDAVRLALHRQTLGFTYINNQMLFCQNEGVLLHKIGKAVIQNIFIKIFPMNPLYIGSDLWKKKFYYLSEWFLEPSVTEPTIKELTLLSYILGCLAGLAAGDSWSILEHEPENLIPLNKFIENDFDLACGISESFLVEFSWLEIFQDESINNEIEFFPKIGARHFLNMMQRGISSTTSGKFMYKQDGLRNRSIFKKTVQYKEKLYELASETTWAPKIWRLSFIRTKSFDWIGRPNDFESLYSFWFLREKEQTFSVSENSREIFHSSQVAQYKTKEELPYERILSRIRRRNVEELESQLGFILSEDQFKILGFPELSTQYRIEYELFQKPMLFMGGRFIWDPTSLSFETRYSVFSRRELFIDEEMRRRLYVTYGARRERERSRSSQKIKQFFLRCGYGRDFMNNSSIGWWNGLFLTEKYNIEIFKRIEEISVQLKHPEVFTPVYLYQSWLIENSREKLSRFDLLNHRERWIKLNNKSFHYFSIHSTLLESYNYLLNFFISNRILLDEMTKMLLKDGWLFQNEIEHFICKMKK</sequence>
<keyword id="KW-0067">ATP-binding</keyword>
<keyword id="KW-0150">Chloroplast</keyword>
<keyword id="KW-0547">Nucleotide-binding</keyword>
<keyword id="KW-0934">Plastid</keyword>
<keyword id="KW-0691">RNA editing</keyword>
<dbReference type="EMBL" id="AB086179">
    <property type="protein sequence ID" value="BAC55342.1"/>
    <property type="molecule type" value="Genomic_DNA"/>
</dbReference>
<dbReference type="EMBL" id="AB087435">
    <property type="protein sequence ID" value="BAC55435.1"/>
    <property type="molecule type" value="mRNA"/>
</dbReference>
<dbReference type="RefSeq" id="NP_777406.1">
    <property type="nucleotide sequence ID" value="NC_004543.1"/>
</dbReference>
<dbReference type="GeneID" id="2553519"/>
<dbReference type="GO" id="GO:0009570">
    <property type="term" value="C:chloroplast stroma"/>
    <property type="evidence" value="ECO:0007669"/>
    <property type="project" value="UniProtKB-SubCell"/>
</dbReference>
<dbReference type="GO" id="GO:0005524">
    <property type="term" value="F:ATP binding"/>
    <property type="evidence" value="ECO:0007669"/>
    <property type="project" value="UniProtKB-KW"/>
</dbReference>
<dbReference type="GO" id="GO:0016887">
    <property type="term" value="F:ATP hydrolysis activity"/>
    <property type="evidence" value="ECO:0007669"/>
    <property type="project" value="InterPro"/>
</dbReference>
<dbReference type="CDD" id="cd19505">
    <property type="entry name" value="RecA-like_Ycf2"/>
    <property type="match status" value="1"/>
</dbReference>
<dbReference type="Gene3D" id="1.10.8.60">
    <property type="match status" value="1"/>
</dbReference>
<dbReference type="Gene3D" id="3.40.50.300">
    <property type="entry name" value="P-loop containing nucleotide triphosphate hydrolases"/>
    <property type="match status" value="1"/>
</dbReference>
<dbReference type="HAMAP" id="MF_01330">
    <property type="entry name" value="Ycf2"/>
    <property type="match status" value="1"/>
</dbReference>
<dbReference type="InterPro" id="IPR003593">
    <property type="entry name" value="AAA+_ATPase"/>
</dbReference>
<dbReference type="InterPro" id="IPR003959">
    <property type="entry name" value="ATPase_AAA_core"/>
</dbReference>
<dbReference type="InterPro" id="IPR027417">
    <property type="entry name" value="P-loop_NTPase"/>
</dbReference>
<dbReference type="InterPro" id="IPR008543">
    <property type="entry name" value="Uncharacterised_Ycf2"/>
</dbReference>
<dbReference type="InterPro" id="IPR056777">
    <property type="entry name" value="Ycf2_N"/>
</dbReference>
<dbReference type="PANTHER" id="PTHR33078:SF101">
    <property type="entry name" value="AAA+ ATPASE DOMAIN, ATPASE, AAA-TYPE, CORE"/>
    <property type="match status" value="1"/>
</dbReference>
<dbReference type="PANTHER" id="PTHR33078">
    <property type="entry name" value="PROTEIN YCF2-RELATED"/>
    <property type="match status" value="1"/>
</dbReference>
<dbReference type="Pfam" id="PF00004">
    <property type="entry name" value="AAA"/>
    <property type="match status" value="1"/>
</dbReference>
<dbReference type="Pfam" id="PF05695">
    <property type="entry name" value="Ycf2"/>
    <property type="match status" value="2"/>
</dbReference>
<dbReference type="SMART" id="SM00382">
    <property type="entry name" value="AAA"/>
    <property type="match status" value="1"/>
</dbReference>
<dbReference type="SUPFAM" id="SSF52540">
    <property type="entry name" value="P-loop containing nucleoside triphosphate hydrolases"/>
    <property type="match status" value="1"/>
</dbReference>
<proteinExistence type="evidence at transcript level"/>
<reference key="1">
    <citation type="journal article" date="2003" name="Nucleic Acids Res.">
        <title>The complete nucleotide sequence of the hornwort (Anthoceros formosae) chloroplast genome: insight into the earliest land plants.</title>
        <authorList>
            <person name="Kugita M."/>
            <person name="Kaneko A."/>
            <person name="Yamamoto Y."/>
            <person name="Takeya Y."/>
            <person name="Matsumoto T."/>
            <person name="Yoshinaga K."/>
        </authorList>
    </citation>
    <scope>NUCLEOTIDE SEQUENCE [LARGE SCALE GENOMIC DNA]</scope>
    <scope>RNA EDITING</scope>
</reference>
<reference key="2">
    <citation type="journal article" date="2003" name="Nucleic Acids Res.">
        <title>RNA editing in hornwort chloroplasts makes more than half the genes functional.</title>
        <authorList>
            <person name="Kugita M."/>
            <person name="Yamamoto Y."/>
            <person name="Fujikawa T."/>
            <person name="Matsumoto T."/>
            <person name="Yoshinaga K."/>
        </authorList>
    </citation>
    <scope>NUCLEOTIDE SEQUENCE [MRNA]</scope>
    <scope>RNA EDITING</scope>
    <source>
        <tissue>Thallus</tissue>
    </source>
</reference>
<organism>
    <name type="scientific">Anthoceros angustus</name>
    <name type="common">Hornwort</name>
    <name type="synonym">Anthoceros formosae</name>
    <dbReference type="NCBI Taxonomy" id="48387"/>
    <lineage>
        <taxon>Eukaryota</taxon>
        <taxon>Viridiplantae</taxon>
        <taxon>Streptophyta</taxon>
        <taxon>Embryophyta</taxon>
        <taxon>Anthocerotophyta</taxon>
        <taxon>Anthocerotopsida</taxon>
        <taxon>Anthocerotidae</taxon>
        <taxon>Anthocerotales</taxon>
        <taxon>Anthocerotaceae</taxon>
        <taxon>Anthoceros</taxon>
    </lineage>
</organism>
<gene>
    <name evidence="1" type="primary">ycf2</name>
</gene>
<accession>Q859W7</accession>
<geneLocation type="chloroplast"/>
<evidence type="ECO:0000255" key="1">
    <source>
        <dbReference type="HAMAP-Rule" id="MF_01330"/>
    </source>
</evidence>
<evidence type="ECO:0000269" key="2">
    <source>
    </source>
</evidence>
<evidence type="ECO:0000269" key="3">
    <source>
    </source>
</evidence>